<proteinExistence type="inferred from homology"/>
<evidence type="ECO:0000255" key="1">
    <source>
        <dbReference type="HAMAP-Rule" id="MF_00801"/>
    </source>
</evidence>
<protein>
    <recommendedName>
        <fullName evidence="1">Endonuclease V</fullName>
        <ecNumber evidence="1">3.1.21.7</ecNumber>
    </recommendedName>
    <alternativeName>
        <fullName evidence="1">Deoxyinosine 3'endonuclease</fullName>
    </alternativeName>
    <alternativeName>
        <fullName evidence="1">Deoxyribonuclease V</fullName>
        <shortName evidence="1">DNase V</shortName>
    </alternativeName>
</protein>
<organism>
    <name type="scientific">Nostoc punctiforme (strain ATCC 29133 / PCC 73102)</name>
    <dbReference type="NCBI Taxonomy" id="63737"/>
    <lineage>
        <taxon>Bacteria</taxon>
        <taxon>Bacillati</taxon>
        <taxon>Cyanobacteriota</taxon>
        <taxon>Cyanophyceae</taxon>
        <taxon>Nostocales</taxon>
        <taxon>Nostocaceae</taxon>
        <taxon>Nostoc</taxon>
    </lineage>
</organism>
<dbReference type="EC" id="3.1.21.7" evidence="1"/>
<dbReference type="EMBL" id="CP001037">
    <property type="protein sequence ID" value="ACC81468.1"/>
    <property type="molecule type" value="Genomic_DNA"/>
</dbReference>
<dbReference type="RefSeq" id="WP_012409459.1">
    <property type="nucleotide sequence ID" value="NC_010628.1"/>
</dbReference>
<dbReference type="SMR" id="B2IWL4"/>
<dbReference type="STRING" id="63737.Npun_F2937"/>
<dbReference type="EnsemblBacteria" id="ACC81468">
    <property type="protein sequence ID" value="ACC81468"/>
    <property type="gene ID" value="Npun_F2937"/>
</dbReference>
<dbReference type="KEGG" id="npu:Npun_F2937"/>
<dbReference type="eggNOG" id="COG1515">
    <property type="taxonomic scope" value="Bacteria"/>
</dbReference>
<dbReference type="HOGENOM" id="CLU_047631_1_1_3"/>
<dbReference type="OrthoDB" id="9790916at2"/>
<dbReference type="PhylomeDB" id="B2IWL4"/>
<dbReference type="Proteomes" id="UP000001191">
    <property type="component" value="Chromosome"/>
</dbReference>
<dbReference type="GO" id="GO:0005737">
    <property type="term" value="C:cytoplasm"/>
    <property type="evidence" value="ECO:0007669"/>
    <property type="project" value="UniProtKB-SubCell"/>
</dbReference>
<dbReference type="GO" id="GO:0043737">
    <property type="term" value="F:deoxyribonuclease V activity"/>
    <property type="evidence" value="ECO:0007669"/>
    <property type="project" value="UniProtKB-UniRule"/>
</dbReference>
<dbReference type="GO" id="GO:0000287">
    <property type="term" value="F:magnesium ion binding"/>
    <property type="evidence" value="ECO:0007669"/>
    <property type="project" value="UniProtKB-UniRule"/>
</dbReference>
<dbReference type="GO" id="GO:0016891">
    <property type="term" value="F:RNA endonuclease activity, producing 5'-phosphomonoesters"/>
    <property type="evidence" value="ECO:0007669"/>
    <property type="project" value="TreeGrafter"/>
</dbReference>
<dbReference type="GO" id="GO:0003727">
    <property type="term" value="F:single-stranded RNA binding"/>
    <property type="evidence" value="ECO:0007669"/>
    <property type="project" value="TreeGrafter"/>
</dbReference>
<dbReference type="GO" id="GO:0006281">
    <property type="term" value="P:DNA repair"/>
    <property type="evidence" value="ECO:0007669"/>
    <property type="project" value="UniProtKB-UniRule"/>
</dbReference>
<dbReference type="CDD" id="cd06559">
    <property type="entry name" value="Endonuclease_V"/>
    <property type="match status" value="1"/>
</dbReference>
<dbReference type="Gene3D" id="3.30.2170.10">
    <property type="entry name" value="archaeoglobus fulgidus dsm 4304 superfamily"/>
    <property type="match status" value="1"/>
</dbReference>
<dbReference type="HAMAP" id="MF_00801">
    <property type="entry name" value="Endonuclease_5"/>
    <property type="match status" value="1"/>
</dbReference>
<dbReference type="InterPro" id="IPR007581">
    <property type="entry name" value="Endonuclease-V"/>
</dbReference>
<dbReference type="NCBIfam" id="NF008629">
    <property type="entry name" value="PRK11617.1"/>
    <property type="match status" value="1"/>
</dbReference>
<dbReference type="PANTHER" id="PTHR28511">
    <property type="entry name" value="ENDONUCLEASE V"/>
    <property type="match status" value="1"/>
</dbReference>
<dbReference type="PANTHER" id="PTHR28511:SF1">
    <property type="entry name" value="ENDONUCLEASE V"/>
    <property type="match status" value="1"/>
</dbReference>
<dbReference type="Pfam" id="PF04493">
    <property type="entry name" value="Endonuclease_5"/>
    <property type="match status" value="1"/>
</dbReference>
<comment type="function">
    <text evidence="1">DNA repair enzyme involved in the repair of deaminated bases. Selectively cleaves double-stranded DNA at the second phosphodiester bond 3' to a deoxyinosine leaving behind the intact lesion on the nicked DNA.</text>
</comment>
<comment type="catalytic activity">
    <reaction evidence="1">
        <text>Endonucleolytic cleavage at apurinic or apyrimidinic sites to products with a 5'-phosphate.</text>
        <dbReference type="EC" id="3.1.21.7"/>
    </reaction>
</comment>
<comment type="cofactor">
    <cofactor evidence="1">
        <name>Mg(2+)</name>
        <dbReference type="ChEBI" id="CHEBI:18420"/>
    </cofactor>
</comment>
<comment type="subcellular location">
    <subcellularLocation>
        <location evidence="1">Cytoplasm</location>
    </subcellularLocation>
</comment>
<comment type="similarity">
    <text evidence="1">Belongs to the endonuclease V family.</text>
</comment>
<reference key="1">
    <citation type="journal article" date="2013" name="Plant Physiol.">
        <title>A Nostoc punctiforme Sugar Transporter Necessary to Establish a Cyanobacterium-Plant Symbiosis.</title>
        <authorList>
            <person name="Ekman M."/>
            <person name="Picossi S."/>
            <person name="Campbell E.L."/>
            <person name="Meeks J.C."/>
            <person name="Flores E."/>
        </authorList>
    </citation>
    <scope>NUCLEOTIDE SEQUENCE [LARGE SCALE GENOMIC DNA]</scope>
    <source>
        <strain>ATCC 29133 / PCC 73102</strain>
    </source>
</reference>
<name>NFI_NOSP7</name>
<keyword id="KW-0963">Cytoplasm</keyword>
<keyword id="KW-0227">DNA damage</keyword>
<keyword id="KW-0234">DNA repair</keyword>
<keyword id="KW-0255">Endonuclease</keyword>
<keyword id="KW-0378">Hydrolase</keyword>
<keyword id="KW-0460">Magnesium</keyword>
<keyword id="KW-0479">Metal-binding</keyword>
<keyword id="KW-0540">Nuclease</keyword>
<keyword id="KW-1185">Reference proteome</keyword>
<accession>B2IWL4</accession>
<feature type="chain" id="PRO_1000191576" description="Endonuclease V">
    <location>
        <begin position="1"/>
        <end position="221"/>
    </location>
</feature>
<feature type="binding site" evidence="1">
    <location>
        <position position="44"/>
    </location>
    <ligand>
        <name>Mg(2+)</name>
        <dbReference type="ChEBI" id="CHEBI:18420"/>
    </ligand>
</feature>
<feature type="binding site" evidence="1">
    <location>
        <position position="112"/>
    </location>
    <ligand>
        <name>Mg(2+)</name>
        <dbReference type="ChEBI" id="CHEBI:18420"/>
    </ligand>
</feature>
<feature type="site" description="Interaction with target DNA" evidence="1">
    <location>
        <position position="82"/>
    </location>
</feature>
<sequence>MKFYRDHTWPSTLEEAIVIQEKLRDQVITEDQLEEPIQYVAGVDMGFEADGTISRAAVAVLSFPDLQVIETSLAHRPTTFPYVPGFLSFREIPAVLDALEKIQTTPNIILCDGQGIAHPRRLGIASHLGLLIDMPTIGVAKSRLVGKYEELAETKGSSQPLIYNGETVGVVLRSRTGVKPLYISSGHRISLPTAIDYVLRCTPKYRLPETTRIADKLASAK</sequence>
<gene>
    <name evidence="1" type="primary">nfi</name>
    <name type="ordered locus">Npun_F2937</name>
</gene>